<dbReference type="EC" id="6.1.1.11" evidence="1"/>
<dbReference type="EMBL" id="CP000562">
    <property type="protein sequence ID" value="ABN56744.1"/>
    <property type="molecule type" value="Genomic_DNA"/>
</dbReference>
<dbReference type="RefSeq" id="WP_011843655.1">
    <property type="nucleotide sequence ID" value="NC_009051.1"/>
</dbReference>
<dbReference type="SMR" id="A3CTP4"/>
<dbReference type="STRING" id="368407.Memar_0811"/>
<dbReference type="GeneID" id="4845999"/>
<dbReference type="GeneID" id="76731380"/>
<dbReference type="KEGG" id="mem:Memar_0811"/>
<dbReference type="eggNOG" id="arCOG00403">
    <property type="taxonomic scope" value="Archaea"/>
</dbReference>
<dbReference type="HOGENOM" id="CLU_023797_0_1_2"/>
<dbReference type="OrthoDB" id="35932at2157"/>
<dbReference type="UniPathway" id="UPA00906">
    <property type="reaction ID" value="UER00895"/>
</dbReference>
<dbReference type="Proteomes" id="UP000002146">
    <property type="component" value="Chromosome"/>
</dbReference>
<dbReference type="GO" id="GO:0005737">
    <property type="term" value="C:cytoplasm"/>
    <property type="evidence" value="ECO:0007669"/>
    <property type="project" value="UniProtKB-SubCell"/>
</dbReference>
<dbReference type="GO" id="GO:0005524">
    <property type="term" value="F:ATP binding"/>
    <property type="evidence" value="ECO:0007669"/>
    <property type="project" value="UniProtKB-UniRule"/>
</dbReference>
<dbReference type="GO" id="GO:0004828">
    <property type="term" value="F:serine-tRNA ligase activity"/>
    <property type="evidence" value="ECO:0007669"/>
    <property type="project" value="UniProtKB-UniRule"/>
</dbReference>
<dbReference type="GO" id="GO:0016260">
    <property type="term" value="P:selenocysteine biosynthetic process"/>
    <property type="evidence" value="ECO:0007669"/>
    <property type="project" value="UniProtKB-UniRule"/>
</dbReference>
<dbReference type="GO" id="GO:0006434">
    <property type="term" value="P:seryl-tRNA aminoacylation"/>
    <property type="evidence" value="ECO:0007669"/>
    <property type="project" value="UniProtKB-UniRule"/>
</dbReference>
<dbReference type="CDD" id="cd00770">
    <property type="entry name" value="SerRS_core"/>
    <property type="match status" value="1"/>
</dbReference>
<dbReference type="Gene3D" id="3.30.930.10">
    <property type="entry name" value="Bira Bifunctional Protein, Domain 2"/>
    <property type="match status" value="1"/>
</dbReference>
<dbReference type="Gene3D" id="1.10.287.40">
    <property type="entry name" value="Serine-tRNA synthetase, tRNA binding domain"/>
    <property type="match status" value="1"/>
</dbReference>
<dbReference type="HAMAP" id="MF_00176">
    <property type="entry name" value="Ser_tRNA_synth_type1"/>
    <property type="match status" value="1"/>
</dbReference>
<dbReference type="InterPro" id="IPR002314">
    <property type="entry name" value="aa-tRNA-synt_IIb"/>
</dbReference>
<dbReference type="InterPro" id="IPR006195">
    <property type="entry name" value="aa-tRNA-synth_II"/>
</dbReference>
<dbReference type="InterPro" id="IPR045864">
    <property type="entry name" value="aa-tRNA-synth_II/BPL/LPL"/>
</dbReference>
<dbReference type="InterPro" id="IPR002317">
    <property type="entry name" value="Ser-tRNA-ligase_type_1"/>
</dbReference>
<dbReference type="InterPro" id="IPR015866">
    <property type="entry name" value="Ser-tRNA-synth_1_N"/>
</dbReference>
<dbReference type="InterPro" id="IPR042103">
    <property type="entry name" value="SerRS_1_N_sf"/>
</dbReference>
<dbReference type="InterPro" id="IPR033729">
    <property type="entry name" value="SerRS_core"/>
</dbReference>
<dbReference type="InterPro" id="IPR010978">
    <property type="entry name" value="tRNA-bd_arm"/>
</dbReference>
<dbReference type="NCBIfam" id="TIGR00414">
    <property type="entry name" value="serS"/>
    <property type="match status" value="1"/>
</dbReference>
<dbReference type="PANTHER" id="PTHR11778">
    <property type="entry name" value="SERYL-TRNA SYNTHETASE"/>
    <property type="match status" value="1"/>
</dbReference>
<dbReference type="Pfam" id="PF02403">
    <property type="entry name" value="Seryl_tRNA_N"/>
    <property type="match status" value="1"/>
</dbReference>
<dbReference type="Pfam" id="PF00587">
    <property type="entry name" value="tRNA-synt_2b"/>
    <property type="match status" value="1"/>
</dbReference>
<dbReference type="PIRSF" id="PIRSF001529">
    <property type="entry name" value="Ser-tRNA-synth_IIa"/>
    <property type="match status" value="1"/>
</dbReference>
<dbReference type="PRINTS" id="PR00981">
    <property type="entry name" value="TRNASYNTHSER"/>
</dbReference>
<dbReference type="SUPFAM" id="SSF55681">
    <property type="entry name" value="Class II aaRS and biotin synthetases"/>
    <property type="match status" value="1"/>
</dbReference>
<dbReference type="SUPFAM" id="SSF46589">
    <property type="entry name" value="tRNA-binding arm"/>
    <property type="match status" value="1"/>
</dbReference>
<dbReference type="PROSITE" id="PS50862">
    <property type="entry name" value="AA_TRNA_LIGASE_II"/>
    <property type="match status" value="1"/>
</dbReference>
<gene>
    <name evidence="1" type="primary">serS</name>
    <name type="ordered locus">Memar_0811</name>
</gene>
<protein>
    <recommendedName>
        <fullName evidence="1">Serine--tRNA ligase</fullName>
        <ecNumber evidence="1">6.1.1.11</ecNumber>
    </recommendedName>
    <alternativeName>
        <fullName evidence="1">Seryl-tRNA synthetase</fullName>
        <shortName evidence="1">SerRS</shortName>
    </alternativeName>
    <alternativeName>
        <fullName evidence="1">Seryl-tRNA(Ser/Sec) synthetase</fullName>
    </alternativeName>
</protein>
<sequence length="425" mass="48635">MLELKFVRAHPEIVRADLTKRGDTEKLAWVDEVLEMDRRARELTVAIGDLRNRRNVISREISQARKAGNDITELLAEAAGLPERIKEVETERETLTEAVRYRLMRLPNILHESVPVGKDDSENVEIRRWGEPEIPAFDLENHGALAVEHGWADFERAAKIAGSGFYFLKGRLALLDMALQRFAMDILVEHGYTPIIPPYMMNRAAYEGVTDLADFENVMYRIDGEDEYLIATSEHPMAAMYCDEIFEEKDLPLRLAGLSPCFRREIGAHGLDTKGLFRVHQFHKVEQFIYATPEQSWDLHEELMANAEEVFQRLGLPYRIVSICTGDIGTVAAKKYDLEVWMPREERYREAVSCSNCTAYQAVRLNIKVRNPTEFTEKRYVHTLNSTAIATSRAIRAILENNQNEDGSVTIPKALRPYLYGSETL</sequence>
<name>SYS_METMJ</name>
<comment type="function">
    <text evidence="1">Catalyzes the attachment of serine to tRNA(Ser). Is also able to aminoacylate tRNA(Sec) with serine, to form the misacylated tRNA L-seryl-tRNA(Sec), which will be further converted into selenocysteinyl-tRNA(Sec).</text>
</comment>
<comment type="catalytic activity">
    <reaction evidence="1">
        <text>tRNA(Ser) + L-serine + ATP = L-seryl-tRNA(Ser) + AMP + diphosphate + H(+)</text>
        <dbReference type="Rhea" id="RHEA:12292"/>
        <dbReference type="Rhea" id="RHEA-COMP:9669"/>
        <dbReference type="Rhea" id="RHEA-COMP:9703"/>
        <dbReference type="ChEBI" id="CHEBI:15378"/>
        <dbReference type="ChEBI" id="CHEBI:30616"/>
        <dbReference type="ChEBI" id="CHEBI:33019"/>
        <dbReference type="ChEBI" id="CHEBI:33384"/>
        <dbReference type="ChEBI" id="CHEBI:78442"/>
        <dbReference type="ChEBI" id="CHEBI:78533"/>
        <dbReference type="ChEBI" id="CHEBI:456215"/>
        <dbReference type="EC" id="6.1.1.11"/>
    </reaction>
</comment>
<comment type="catalytic activity">
    <reaction evidence="1">
        <text>tRNA(Sec) + L-serine + ATP = L-seryl-tRNA(Sec) + AMP + diphosphate + H(+)</text>
        <dbReference type="Rhea" id="RHEA:42580"/>
        <dbReference type="Rhea" id="RHEA-COMP:9742"/>
        <dbReference type="Rhea" id="RHEA-COMP:10128"/>
        <dbReference type="ChEBI" id="CHEBI:15378"/>
        <dbReference type="ChEBI" id="CHEBI:30616"/>
        <dbReference type="ChEBI" id="CHEBI:33019"/>
        <dbReference type="ChEBI" id="CHEBI:33384"/>
        <dbReference type="ChEBI" id="CHEBI:78442"/>
        <dbReference type="ChEBI" id="CHEBI:78533"/>
        <dbReference type="ChEBI" id="CHEBI:456215"/>
        <dbReference type="EC" id="6.1.1.11"/>
    </reaction>
</comment>
<comment type="pathway">
    <text evidence="1">Aminoacyl-tRNA biosynthesis; selenocysteinyl-tRNA(Sec) biosynthesis; L-seryl-tRNA(Sec) from L-serine and tRNA(Sec): step 1/1.</text>
</comment>
<comment type="subunit">
    <text evidence="1">Homodimer. The tRNA molecule binds across the dimer.</text>
</comment>
<comment type="subcellular location">
    <subcellularLocation>
        <location evidence="1">Cytoplasm</location>
    </subcellularLocation>
</comment>
<comment type="domain">
    <text evidence="1">Consists of two distinct domains, a catalytic core and a N-terminal extension that is involved in tRNA binding.</text>
</comment>
<comment type="similarity">
    <text evidence="1">Belongs to the class-II aminoacyl-tRNA synthetase family. Type-1 seryl-tRNA synthetase subfamily.</text>
</comment>
<accession>A3CTP4</accession>
<evidence type="ECO:0000255" key="1">
    <source>
        <dbReference type="HAMAP-Rule" id="MF_00176"/>
    </source>
</evidence>
<proteinExistence type="inferred from homology"/>
<feature type="chain" id="PRO_1000019730" description="Serine--tRNA ligase">
    <location>
        <begin position="1"/>
        <end position="425"/>
    </location>
</feature>
<feature type="binding site" evidence="1">
    <location>
        <begin position="232"/>
        <end position="234"/>
    </location>
    <ligand>
        <name>L-serine</name>
        <dbReference type="ChEBI" id="CHEBI:33384"/>
    </ligand>
</feature>
<feature type="binding site" evidence="1">
    <location>
        <begin position="263"/>
        <end position="265"/>
    </location>
    <ligand>
        <name>ATP</name>
        <dbReference type="ChEBI" id="CHEBI:30616"/>
    </ligand>
</feature>
<feature type="binding site" evidence="1">
    <location>
        <position position="279"/>
    </location>
    <ligand>
        <name>ATP</name>
        <dbReference type="ChEBI" id="CHEBI:30616"/>
    </ligand>
</feature>
<feature type="binding site" evidence="1">
    <location>
        <position position="286"/>
    </location>
    <ligand>
        <name>L-serine</name>
        <dbReference type="ChEBI" id="CHEBI:33384"/>
    </ligand>
</feature>
<feature type="binding site" evidence="1">
    <location>
        <begin position="350"/>
        <end position="353"/>
    </location>
    <ligand>
        <name>ATP</name>
        <dbReference type="ChEBI" id="CHEBI:30616"/>
    </ligand>
</feature>
<feature type="binding site" evidence="1">
    <location>
        <position position="387"/>
    </location>
    <ligand>
        <name>L-serine</name>
        <dbReference type="ChEBI" id="CHEBI:33384"/>
    </ligand>
</feature>
<reference key="1">
    <citation type="journal article" date="2009" name="Stand. Genomic Sci.">
        <title>Complete genome sequence of Methanoculleus marisnigri Romesser et al. 1981 type strain JR1.</title>
        <authorList>
            <person name="Anderson I.J."/>
            <person name="Sieprawska-Lupa M."/>
            <person name="Lapidus A."/>
            <person name="Nolan M."/>
            <person name="Copeland A."/>
            <person name="Glavina Del Rio T."/>
            <person name="Tice H."/>
            <person name="Dalin E."/>
            <person name="Barry K."/>
            <person name="Saunders E."/>
            <person name="Han C."/>
            <person name="Brettin T."/>
            <person name="Detter J.C."/>
            <person name="Bruce D."/>
            <person name="Mikhailova N."/>
            <person name="Pitluck S."/>
            <person name="Hauser L."/>
            <person name="Land M."/>
            <person name="Lucas S."/>
            <person name="Richardson P."/>
            <person name="Whitman W.B."/>
            <person name="Kyrpides N.C."/>
        </authorList>
    </citation>
    <scope>NUCLEOTIDE SEQUENCE [LARGE SCALE GENOMIC DNA]</scope>
    <source>
        <strain>ATCC 35101 / DSM 1498 / JR1</strain>
    </source>
</reference>
<organism>
    <name type="scientific">Methanoculleus marisnigri (strain ATCC 35101 / DSM 1498 / JR1)</name>
    <dbReference type="NCBI Taxonomy" id="368407"/>
    <lineage>
        <taxon>Archaea</taxon>
        <taxon>Methanobacteriati</taxon>
        <taxon>Methanobacteriota</taxon>
        <taxon>Stenosarchaea group</taxon>
        <taxon>Methanomicrobia</taxon>
        <taxon>Methanomicrobiales</taxon>
        <taxon>Methanomicrobiaceae</taxon>
        <taxon>Methanoculleus</taxon>
    </lineage>
</organism>
<keyword id="KW-0030">Aminoacyl-tRNA synthetase</keyword>
<keyword id="KW-0067">ATP-binding</keyword>
<keyword id="KW-0963">Cytoplasm</keyword>
<keyword id="KW-0436">Ligase</keyword>
<keyword id="KW-0547">Nucleotide-binding</keyword>
<keyword id="KW-0648">Protein biosynthesis</keyword>